<evidence type="ECO:0000255" key="1"/>
<evidence type="ECO:0000269" key="2">
    <source>
    </source>
</evidence>
<evidence type="ECO:0000269" key="3">
    <source>
    </source>
</evidence>
<evidence type="ECO:0000269" key="4">
    <source>
    </source>
</evidence>
<evidence type="ECO:0000269" key="5">
    <source>
    </source>
</evidence>
<evidence type="ECO:0000303" key="6">
    <source>
    </source>
</evidence>
<evidence type="ECO:0000305" key="7"/>
<evidence type="ECO:0000305" key="8">
    <source>
    </source>
</evidence>
<evidence type="ECO:0000305" key="9">
    <source>
    </source>
</evidence>
<evidence type="ECO:0000312" key="10">
    <source>
        <dbReference type="EMBL" id="AAK04999.1"/>
    </source>
</evidence>
<comment type="function">
    <text evidence="2 4 5">Secondary transporter involved in malolactic fermentation (PubMed:1917837, PubMed:9218448). Catalyzes the uptake of divalent malate into the cell coupled to the exit of monovalent lactate, a product of malate degradation (precursor/product exchange) (PubMed:10441129, PubMed:1917837, PubMed:9218448). The malate/lactate exchange is electrogenic and results in the generation of a membrane potential (PubMed:1917837, PubMed:9218448). Is highly selective for the S-enantiomer of malate (PubMed:10441129). In the absence of lactate, MleP can also catalyze the proton-dependent transport of malate (PubMed:1917837). In vitro, transports a range of substrates that contain the 2-hydroxycarboxylate motif, HO-CR(2)-COO(-), with a preference for malate, lactate and glycolate (PubMed:10441129, PubMed:9218448). Modification of the OH or the COO(-) groups of the 2-hydroxycarboxylate motif drastically reduces the affinity of the transporter for the substrates, indicating their relevance in substrate recognition (PubMed:10441129). Significant activity is also observed with some 2-oxocarboxylates (PubMed:9218448). Transports only poorly citromalate (PubMed:10441129, PubMed:9218448). Citrate binds to MleP but is not translocated (PubMed:10441129, PubMed:9218448).</text>
</comment>
<comment type="catalytic activity">
    <reaction evidence="2 4 9">
        <text>(S)-lactate(in) + (S)-malate(out) = (S)-lactate(out) + (S)-malate(in)</text>
        <dbReference type="Rhea" id="RHEA:79475"/>
        <dbReference type="ChEBI" id="CHEBI:15589"/>
        <dbReference type="ChEBI" id="CHEBI:16651"/>
    </reaction>
    <physiologicalReaction direction="left-to-right" evidence="2 4 9">
        <dbReference type="Rhea" id="RHEA:79476"/>
    </physiologicalReaction>
</comment>
<comment type="catalytic activity">
    <reaction evidence="2 4 9">
        <text>(R)-lactate(in) + (S)-malate(out) = (R)-lactate(out) + (S)-malate(in)</text>
        <dbReference type="Rhea" id="RHEA:79479"/>
        <dbReference type="ChEBI" id="CHEBI:15589"/>
        <dbReference type="ChEBI" id="CHEBI:16004"/>
    </reaction>
    <physiologicalReaction direction="left-to-right" evidence="2 4 9">
        <dbReference type="Rhea" id="RHEA:79480"/>
    </physiologicalReaction>
</comment>
<comment type="catalytic activity">
    <reaction evidence="2 5">
        <text>glycolate(in) + (S)-malate(out) = glycolate(out) + (S)-malate(in)</text>
        <dbReference type="Rhea" id="RHEA:79483"/>
        <dbReference type="ChEBI" id="CHEBI:15589"/>
        <dbReference type="ChEBI" id="CHEBI:29805"/>
    </reaction>
</comment>
<comment type="biophysicochemical properties">
    <kinetics>
        <KM evidence="2">4.6 mM for (S)-lactate</KM>
        <KM evidence="2">14 mM for (R)-lactate</KM>
        <KM evidence="2">0.46 mM for (S)-malate</KM>
        <KM evidence="3">0.47 mM for (S)-malate</KM>
    </kinetics>
</comment>
<comment type="subcellular location">
    <subcellularLocation>
        <location evidence="8 9">Cell membrane</location>
        <topology evidence="1">Multi-pass membrane protein</topology>
    </subcellularLocation>
</comment>
<comment type="domain">
    <text evidence="3">The 46 C-terminal residues contain structural elements that interact with the R groups of the substrates (PubMed:11041872). Interchanging the 46 C-terminal amino acid residues of CitP and MleP alters neither the specificity nor the affinity for the di- and tricarboxylates malate and citrate (PubMed:11041872). In contrast, changes in substrate specificity are observed with monocarboxylates (PubMed:11041872).</text>
</comment>
<comment type="similarity">
    <text evidence="7">Belongs to the 2-hydroxycarboxylate transporter (2-HCT) (TC 2.A.24) family.</text>
</comment>
<dbReference type="EMBL" id="X75982">
    <property type="protein sequence ID" value="CAA53590.1"/>
    <property type="molecule type" value="Genomic_DNA"/>
</dbReference>
<dbReference type="EMBL" id="AE005176">
    <property type="protein sequence ID" value="AAK04999.1"/>
    <property type="molecule type" value="Genomic_DNA"/>
</dbReference>
<dbReference type="PIR" id="E86737">
    <property type="entry name" value="E86737"/>
</dbReference>
<dbReference type="PIR" id="S38729">
    <property type="entry name" value="S38729"/>
</dbReference>
<dbReference type="RefSeq" id="NP_267057.1">
    <property type="nucleotide sequence ID" value="NC_002662.1"/>
</dbReference>
<dbReference type="RefSeq" id="WP_010905617.1">
    <property type="nucleotide sequence ID" value="NC_002662.1"/>
</dbReference>
<dbReference type="SMR" id="O07032"/>
<dbReference type="TCDB" id="2.A.24.2.2">
    <property type="family name" value="the 2-hydroxycarboxylate transporter (2-hct) family"/>
</dbReference>
<dbReference type="PaxDb" id="272623-L123159"/>
<dbReference type="EnsemblBacteria" id="AAK04999">
    <property type="protein sequence ID" value="AAK04999"/>
    <property type="gene ID" value="L123159"/>
</dbReference>
<dbReference type="KEGG" id="lla:L123159"/>
<dbReference type="PATRIC" id="fig|272623.7.peg.966"/>
<dbReference type="eggNOG" id="COG3493">
    <property type="taxonomic scope" value="Bacteria"/>
</dbReference>
<dbReference type="HOGENOM" id="CLU_041211_0_1_9"/>
<dbReference type="OrthoDB" id="8584824at2"/>
<dbReference type="Proteomes" id="UP000002196">
    <property type="component" value="Chromosome"/>
</dbReference>
<dbReference type="GO" id="GO:0005886">
    <property type="term" value="C:plasma membrane"/>
    <property type="evidence" value="ECO:0007669"/>
    <property type="project" value="UniProtKB-SubCell"/>
</dbReference>
<dbReference type="GO" id="GO:0015297">
    <property type="term" value="F:antiporter activity"/>
    <property type="evidence" value="ECO:0007669"/>
    <property type="project" value="UniProtKB-KW"/>
</dbReference>
<dbReference type="GO" id="GO:0008514">
    <property type="term" value="F:organic anion transmembrane transporter activity"/>
    <property type="evidence" value="ECO:0007669"/>
    <property type="project" value="InterPro"/>
</dbReference>
<dbReference type="GO" id="GO:0015293">
    <property type="term" value="F:symporter activity"/>
    <property type="evidence" value="ECO:0007669"/>
    <property type="project" value="UniProtKB-KW"/>
</dbReference>
<dbReference type="InterPro" id="IPR018025">
    <property type="entry name" value="2-OHcarbox_trans_Prot/Firm"/>
</dbReference>
<dbReference type="InterPro" id="IPR004679">
    <property type="entry name" value="2-OHcarboxylate_transport"/>
</dbReference>
<dbReference type="NCBIfam" id="TIGR00783">
    <property type="entry name" value="ccs"/>
    <property type="match status" value="1"/>
</dbReference>
<dbReference type="PANTHER" id="PTHR40033:SF1">
    <property type="entry name" value="CITRATE-SODIUM SYMPORTER"/>
    <property type="match status" value="1"/>
</dbReference>
<dbReference type="PANTHER" id="PTHR40033">
    <property type="entry name" value="NA(+)-MALATE SYMPORTER"/>
    <property type="match status" value="1"/>
</dbReference>
<dbReference type="Pfam" id="PF03390">
    <property type="entry name" value="2HCT"/>
    <property type="match status" value="1"/>
</dbReference>
<dbReference type="PIRSF" id="PIRSF005348">
    <property type="entry name" value="YxkH"/>
    <property type="match status" value="1"/>
</dbReference>
<keyword id="KW-0050">Antiport</keyword>
<keyword id="KW-1003">Cell membrane</keyword>
<keyword id="KW-0472">Membrane</keyword>
<keyword id="KW-1185">Reference proteome</keyword>
<keyword id="KW-0769">Symport</keyword>
<keyword id="KW-0812">Transmembrane</keyword>
<keyword id="KW-1133">Transmembrane helix</keyword>
<keyword id="KW-0813">Transport</keyword>
<accession>O07032</accession>
<organism>
    <name type="scientific">Lactococcus lactis subsp. lactis (strain IL1403)</name>
    <name type="common">Streptococcus lactis</name>
    <dbReference type="NCBI Taxonomy" id="272623"/>
    <lineage>
        <taxon>Bacteria</taxon>
        <taxon>Bacillati</taxon>
        <taxon>Bacillota</taxon>
        <taxon>Bacilli</taxon>
        <taxon>Lactobacillales</taxon>
        <taxon>Streptococcaceae</taxon>
        <taxon>Lactococcus</taxon>
    </lineage>
</organism>
<reference key="1">
    <citation type="journal article" date="1997" name="J. Biol. Chem.">
        <title>Membrane potential-generating malate (MleP) and citrate (CitP) transporters of lactic acid bacteria are homologous proteins. Substrate specificity of the 2-hydroxycarboxylate transporter family.</title>
        <authorList>
            <person name="Bandell M."/>
            <person name="Ansanay V."/>
            <person name="Rachidi N."/>
            <person name="Dequin S."/>
            <person name="Lolkema J.S."/>
        </authorList>
    </citation>
    <scope>NUCLEOTIDE SEQUENCE [GENOMIC DNA]</scope>
    <scope>FUNCTION</scope>
    <scope>TRANSPORTER ACTIVITY</scope>
    <source>
        <strain>IL1441</strain>
    </source>
</reference>
<reference key="2">
    <citation type="journal article" date="2001" name="Genome Res.">
        <title>The complete genome sequence of the lactic acid bacterium Lactococcus lactis ssp. lactis IL1403.</title>
        <authorList>
            <person name="Bolotin A."/>
            <person name="Wincker P."/>
            <person name="Mauger S."/>
            <person name="Jaillon O."/>
            <person name="Malarme K."/>
            <person name="Weissenbach J."/>
            <person name="Ehrlich S.D."/>
            <person name="Sorokin A."/>
        </authorList>
    </citation>
    <scope>NUCLEOTIDE SEQUENCE [LARGE SCALE GENOMIC DNA]</scope>
    <source>
        <strain>IL1403</strain>
    </source>
</reference>
<reference key="3">
    <citation type="journal article" date="1991" name="J. Bacteriol.">
        <title>Malolactic fermentation: electrogenic malate uptake and malate/lactate antiport generate metabolic energy.</title>
        <authorList>
            <person name="Poolman B."/>
            <person name="Molenaar D."/>
            <person name="Smid E.J."/>
            <person name="Ubbink T."/>
            <person name="Abee T."/>
            <person name="Renault P.P."/>
            <person name="Konings W.N."/>
        </authorList>
    </citation>
    <scope>FUNCTION</scope>
    <scope>TRANSPORTER ACTIVITY</scope>
    <source>
        <strain>IL1403</strain>
        <strain>IL1441</strain>
    </source>
</reference>
<reference key="4">
    <citation type="journal article" date="1999" name="Biochemistry">
        <title>Stereoselectivity of the membrane potential-generating citrate and malate transporters of lactic acid bacteria.</title>
        <authorList>
            <person name="Bandell M."/>
            <person name="Lolkema J.S."/>
        </authorList>
    </citation>
    <scope>FUNCTION</scope>
    <scope>TRANSPORTER ACTIVITY</scope>
    <scope>SUBSTRATE SPECIFICITY</scope>
    <scope>BIOPHYSICOCHEMICAL PROPERTIES</scope>
    <source>
        <strain>IL1403</strain>
    </source>
</reference>
<reference key="5">
    <citation type="journal article" date="2000" name="Biochemistry">
        <title>The conserved C-terminus of the citrate (CitP) and malate (MleP) transporters of lactic acid bacteria is involved in substrate recognition.</title>
        <authorList>
            <person name="Bandell M."/>
            <person name="Lolkema J.S."/>
        </authorList>
    </citation>
    <scope>BIOPHYSICOCHEMICAL PROPERTIES</scope>
    <scope>DOMAIN</scope>
</reference>
<protein>
    <recommendedName>
        <fullName evidence="6">Malate transporter MleP</fullName>
    </recommendedName>
    <alternativeName>
        <fullName evidence="7">Malate/lactate antiporter</fullName>
    </alternativeName>
</protein>
<feature type="chain" id="PRO_0000460555" description="Malate transporter MleP">
    <location>
        <begin position="1"/>
        <end position="425"/>
    </location>
</feature>
<feature type="transmembrane region" description="Helical" evidence="1">
    <location>
        <begin position="11"/>
        <end position="31"/>
    </location>
</feature>
<feature type="transmembrane region" description="Helical" evidence="1">
    <location>
        <begin position="35"/>
        <end position="55"/>
    </location>
</feature>
<feature type="transmembrane region" description="Helical" evidence="1">
    <location>
        <begin position="65"/>
        <end position="85"/>
    </location>
</feature>
<feature type="transmembrane region" description="Helical" evidence="1">
    <location>
        <begin position="96"/>
        <end position="116"/>
    </location>
</feature>
<feature type="transmembrane region" description="Helical" evidence="1">
    <location>
        <begin position="134"/>
        <end position="154"/>
    </location>
</feature>
<feature type="transmembrane region" description="Helical" evidence="1">
    <location>
        <begin position="196"/>
        <end position="216"/>
    </location>
</feature>
<feature type="transmembrane region" description="Helical" evidence="1">
    <location>
        <begin position="246"/>
        <end position="266"/>
    </location>
</feature>
<feature type="transmembrane region" description="Helical" evidence="1">
    <location>
        <begin position="269"/>
        <end position="289"/>
    </location>
</feature>
<feature type="transmembrane region" description="Helical" evidence="1">
    <location>
        <begin position="310"/>
        <end position="330"/>
    </location>
</feature>
<feature type="transmembrane region" description="Helical" evidence="1">
    <location>
        <begin position="339"/>
        <end position="359"/>
    </location>
</feature>
<feature type="transmembrane region" description="Helical" evidence="1">
    <location>
        <begin position="401"/>
        <end position="421"/>
    </location>
</feature>
<proteinExistence type="evidence at protein level"/>
<name>MLEP_LACLA</name>
<sequence length="425" mass="45309">MKKLKETKISGISLPLYAFFVAVIIVVTLLGKLPLDMVGLTLLLVTLGHLLYFIGEKFPIMNSYLGGGSVFTLIGATLLSFFHIVPSNVIGAVSNFMGGKFGFLDFYIAALICGSILGMNRNLLVKASKKFIPIALITMVIGFFSVGLVGMLIGNGFADSVMYVSMPMMSGGMGAGITPLSQIYAAGLAHGNQAAIFSQLAPAVTFGNILAIIGALSIAKVFNKSKYNGHGTLVAATKEELAKPKIKLDAQQIGTGMLFAFALLMAGDILNKFFPNIHQYAFMIIIVFILKATNTVPKDLEESVVMFNQVIMTNLTHAVLAGIGLALIDLNTLASAFTWQFVVLCLTSVVVMGLASWFLARLFGLYPVETAIGAGMINNSMGGTGNIAVLSASDRMEMIAFAQMANRLCGAIVLIFGGILIRFFY</sequence>
<gene>
    <name evidence="6" type="primary">mleP</name>
    <name evidence="7" type="ordered locus">LL0901</name>
    <name evidence="10" type="ORF">L123159</name>
</gene>